<evidence type="ECO:0000255" key="1">
    <source>
        <dbReference type="HAMAP-Rule" id="MF_00636"/>
    </source>
</evidence>
<keyword id="KW-0067">ATP-binding</keyword>
<keyword id="KW-0342">GTP-binding</keyword>
<keyword id="KW-0547">Nucleotide-binding</keyword>
<accession>A5WHC8</accession>
<feature type="chain" id="PRO_1000072677" description="Nucleotide-binding protein PsycPRwf_2129">
    <location>
        <begin position="1"/>
        <end position="315"/>
    </location>
</feature>
<feature type="binding site" evidence="1">
    <location>
        <begin position="29"/>
        <end position="36"/>
    </location>
    <ligand>
        <name>ATP</name>
        <dbReference type="ChEBI" id="CHEBI:30616"/>
    </ligand>
</feature>
<feature type="binding site" evidence="1">
    <location>
        <begin position="79"/>
        <end position="82"/>
    </location>
    <ligand>
        <name>GTP</name>
        <dbReference type="ChEBI" id="CHEBI:37565"/>
    </ligand>
</feature>
<sequence length="315" mass="35092">MSANESVVTADLKPRVPSTGSVDVLIVSGRSGSGKTSVLNILEDLGYYVIDNMPLSLLSDAAHKLTEDGGITNLALGVDIRTLKADSASFSAIYDTLLNSYGPDKVRIMYVTAQESVLVARFAATRRVHPLMAVNDYEIKNLPSAIIKETETLRPISGNADITIDTSQLNIHQLKELVREYVGADNQITVNVLSFGFKYGVPIDADFVFDVRILPNPHWEPQLRVKTGKDTEVAAFFANFPQVEEMKQDIYRYLDRWLPEFLHNNRHTVTVAVGCTGGKHRSVFLAESLYSMLSESLPREIKVMVKHREKAHWKA</sequence>
<dbReference type="EMBL" id="CP000713">
    <property type="protein sequence ID" value="ABQ95069.1"/>
    <property type="molecule type" value="Genomic_DNA"/>
</dbReference>
<dbReference type="SMR" id="A5WHC8"/>
<dbReference type="STRING" id="349106.PsycPRwf_2129"/>
<dbReference type="KEGG" id="prw:PsycPRwf_2129"/>
<dbReference type="eggNOG" id="COG1660">
    <property type="taxonomic scope" value="Bacteria"/>
</dbReference>
<dbReference type="HOGENOM" id="CLU_059558_0_0_6"/>
<dbReference type="GO" id="GO:0005524">
    <property type="term" value="F:ATP binding"/>
    <property type="evidence" value="ECO:0007669"/>
    <property type="project" value="UniProtKB-UniRule"/>
</dbReference>
<dbReference type="GO" id="GO:0005525">
    <property type="term" value="F:GTP binding"/>
    <property type="evidence" value="ECO:0007669"/>
    <property type="project" value="UniProtKB-UniRule"/>
</dbReference>
<dbReference type="Gene3D" id="3.40.50.300">
    <property type="entry name" value="P-loop containing nucleotide triphosphate hydrolases"/>
    <property type="match status" value="1"/>
</dbReference>
<dbReference type="HAMAP" id="MF_00636">
    <property type="entry name" value="RapZ_like"/>
    <property type="match status" value="1"/>
</dbReference>
<dbReference type="InterPro" id="IPR027417">
    <property type="entry name" value="P-loop_NTPase"/>
</dbReference>
<dbReference type="InterPro" id="IPR005337">
    <property type="entry name" value="RapZ-like"/>
</dbReference>
<dbReference type="InterPro" id="IPR053930">
    <property type="entry name" value="RapZ-like_N"/>
</dbReference>
<dbReference type="InterPro" id="IPR053931">
    <property type="entry name" value="RapZ_C"/>
</dbReference>
<dbReference type="NCBIfam" id="NF003828">
    <property type="entry name" value="PRK05416.1"/>
    <property type="match status" value="1"/>
</dbReference>
<dbReference type="PANTHER" id="PTHR30448">
    <property type="entry name" value="RNASE ADAPTER PROTEIN RAPZ"/>
    <property type="match status" value="1"/>
</dbReference>
<dbReference type="PANTHER" id="PTHR30448:SF0">
    <property type="entry name" value="RNASE ADAPTER PROTEIN RAPZ"/>
    <property type="match status" value="1"/>
</dbReference>
<dbReference type="Pfam" id="PF22740">
    <property type="entry name" value="PapZ_C"/>
    <property type="match status" value="1"/>
</dbReference>
<dbReference type="Pfam" id="PF03668">
    <property type="entry name" value="RapZ-like_N"/>
    <property type="match status" value="1"/>
</dbReference>
<dbReference type="PIRSF" id="PIRSF005052">
    <property type="entry name" value="P-loopkin"/>
    <property type="match status" value="1"/>
</dbReference>
<dbReference type="SUPFAM" id="SSF52540">
    <property type="entry name" value="P-loop containing nucleoside triphosphate hydrolases"/>
    <property type="match status" value="1"/>
</dbReference>
<organism>
    <name type="scientific">Psychrobacter sp. (strain PRwf-1)</name>
    <dbReference type="NCBI Taxonomy" id="349106"/>
    <lineage>
        <taxon>Bacteria</taxon>
        <taxon>Pseudomonadati</taxon>
        <taxon>Pseudomonadota</taxon>
        <taxon>Gammaproteobacteria</taxon>
        <taxon>Moraxellales</taxon>
        <taxon>Moraxellaceae</taxon>
        <taxon>Psychrobacter</taxon>
    </lineage>
</organism>
<comment type="function">
    <text evidence="1">Displays ATPase and GTPase activities.</text>
</comment>
<comment type="similarity">
    <text evidence="1">Belongs to the RapZ-like family.</text>
</comment>
<gene>
    <name type="ordered locus">PsycPRwf_2129</name>
</gene>
<protein>
    <recommendedName>
        <fullName evidence="1">Nucleotide-binding protein PsycPRwf_2129</fullName>
    </recommendedName>
</protein>
<proteinExistence type="inferred from homology"/>
<reference key="1">
    <citation type="submission" date="2007-05" db="EMBL/GenBank/DDBJ databases">
        <title>Complete sequence of chromosome of Psychrobacter sp. PRwf-1.</title>
        <authorList>
            <consortium name="US DOE Joint Genome Institute"/>
            <person name="Copeland A."/>
            <person name="Lucas S."/>
            <person name="Lapidus A."/>
            <person name="Barry K."/>
            <person name="Detter J.C."/>
            <person name="Glavina del Rio T."/>
            <person name="Hammon N."/>
            <person name="Israni S."/>
            <person name="Dalin E."/>
            <person name="Tice H."/>
            <person name="Pitluck S."/>
            <person name="Chain P."/>
            <person name="Malfatti S."/>
            <person name="Shin M."/>
            <person name="Vergez L."/>
            <person name="Schmutz J."/>
            <person name="Larimer F."/>
            <person name="Land M."/>
            <person name="Hauser L."/>
            <person name="Kyrpides N."/>
            <person name="Kim E."/>
            <person name="Tiedje J."/>
            <person name="Richardson P."/>
        </authorList>
    </citation>
    <scope>NUCLEOTIDE SEQUENCE [LARGE SCALE GENOMIC DNA]</scope>
    <source>
        <strain>PRwf-1</strain>
    </source>
</reference>
<name>Y2129_PSYWF</name>